<reference key="1">
    <citation type="journal article" date="2008" name="Proc. Natl. Acad. Sci. U.S.A.">
        <title>The genome sequence of Bifidobacterium longum subsp. infantis reveals adaptations for milk utilization within the infant microbiome.</title>
        <authorList>
            <person name="Sela D.A."/>
            <person name="Chapman J."/>
            <person name="Adeuya A."/>
            <person name="Kim J.H."/>
            <person name="Chen F."/>
            <person name="Whitehead T.R."/>
            <person name="Lapidus A."/>
            <person name="Rokhsar D.S."/>
            <person name="Lebrilla C.B."/>
            <person name="German J.B."/>
            <person name="Price N.P."/>
            <person name="Richardson P.M."/>
            <person name="Mills D.A."/>
        </authorList>
    </citation>
    <scope>NUCLEOTIDE SEQUENCE [LARGE SCALE GENOMIC DNA]</scope>
    <source>
        <strain>ATCC 15697 / DSM 20088 / JCM 1222 / NCTC 11817 / S12</strain>
    </source>
</reference>
<reference key="2">
    <citation type="journal article" date="2011" name="Nature">
        <title>Bifidobacteria can protect from enteropathogenic infection through production of acetate.</title>
        <authorList>
            <person name="Fukuda S."/>
            <person name="Toh H."/>
            <person name="Hase K."/>
            <person name="Oshima K."/>
            <person name="Nakanishi Y."/>
            <person name="Yoshimura K."/>
            <person name="Tobe T."/>
            <person name="Clarke J.M."/>
            <person name="Topping D.L."/>
            <person name="Suzuki T."/>
            <person name="Taylor T.D."/>
            <person name="Itoh K."/>
            <person name="Kikuchi J."/>
            <person name="Morita H."/>
            <person name="Hattori M."/>
            <person name="Ohno H."/>
        </authorList>
    </citation>
    <scope>NUCLEOTIDE SEQUENCE [LARGE SCALE GENOMIC DNA]</scope>
    <source>
        <strain>ATCC 15697 / DSM 20088 / JCM 1222 / NCTC 11817 / S12</strain>
    </source>
</reference>
<name>WHIA_BIFLS</name>
<feature type="chain" id="PRO_0000376450" description="Probable cell division protein WhiA">
    <location>
        <begin position="1"/>
        <end position="316"/>
    </location>
</feature>
<feature type="DNA-binding region" description="H-T-H motif" evidence="1">
    <location>
        <begin position="276"/>
        <end position="309"/>
    </location>
</feature>
<evidence type="ECO:0000255" key="1">
    <source>
        <dbReference type="HAMAP-Rule" id="MF_01420"/>
    </source>
</evidence>
<gene>
    <name evidence="1" type="primary">whiA</name>
    <name type="ordered locus">Blon_1086</name>
    <name type="ordered locus">BLIJ_1110</name>
</gene>
<dbReference type="EMBL" id="CP001095">
    <property type="protein sequence ID" value="ACJ52176.1"/>
    <property type="molecule type" value="Genomic_DNA"/>
</dbReference>
<dbReference type="EMBL" id="AP010889">
    <property type="protein sequence ID" value="BAJ68698.1"/>
    <property type="molecule type" value="Genomic_DNA"/>
</dbReference>
<dbReference type="RefSeq" id="WP_012577435.1">
    <property type="nucleotide sequence ID" value="NZ_JDTT01000017.1"/>
</dbReference>
<dbReference type="SMR" id="B7GQU6"/>
<dbReference type="KEGG" id="bln:Blon_1086"/>
<dbReference type="KEGG" id="blon:BLIJ_1110"/>
<dbReference type="PATRIC" id="fig|391904.8.peg.1109"/>
<dbReference type="HOGENOM" id="CLU_053282_0_0_11"/>
<dbReference type="Proteomes" id="UP000001360">
    <property type="component" value="Chromosome"/>
</dbReference>
<dbReference type="GO" id="GO:0003677">
    <property type="term" value="F:DNA binding"/>
    <property type="evidence" value="ECO:0007669"/>
    <property type="project" value="UniProtKB-UniRule"/>
</dbReference>
<dbReference type="GO" id="GO:0051301">
    <property type="term" value="P:cell division"/>
    <property type="evidence" value="ECO:0007669"/>
    <property type="project" value="UniProtKB-UniRule"/>
</dbReference>
<dbReference type="GO" id="GO:0043937">
    <property type="term" value="P:regulation of sporulation"/>
    <property type="evidence" value="ECO:0007669"/>
    <property type="project" value="InterPro"/>
</dbReference>
<dbReference type="Gene3D" id="3.10.28.10">
    <property type="entry name" value="Homing endonucleases"/>
    <property type="match status" value="1"/>
</dbReference>
<dbReference type="HAMAP" id="MF_01420">
    <property type="entry name" value="HTH_type_WhiA"/>
    <property type="match status" value="1"/>
</dbReference>
<dbReference type="InterPro" id="IPR027434">
    <property type="entry name" value="Homing_endonucl"/>
</dbReference>
<dbReference type="InterPro" id="IPR018478">
    <property type="entry name" value="Sporu_reg_WhiA_N_dom"/>
</dbReference>
<dbReference type="InterPro" id="IPR003802">
    <property type="entry name" value="Sporulation_regulator_WhiA"/>
</dbReference>
<dbReference type="InterPro" id="IPR023054">
    <property type="entry name" value="Sporulation_regulator_WhiA_C"/>
</dbReference>
<dbReference type="InterPro" id="IPR039518">
    <property type="entry name" value="WhiA_LAGLIDADG_dom"/>
</dbReference>
<dbReference type="NCBIfam" id="TIGR00647">
    <property type="entry name" value="DNA_bind_WhiA"/>
    <property type="match status" value="1"/>
</dbReference>
<dbReference type="PANTHER" id="PTHR37307">
    <property type="entry name" value="CELL DIVISION PROTEIN WHIA-RELATED"/>
    <property type="match status" value="1"/>
</dbReference>
<dbReference type="PANTHER" id="PTHR37307:SF1">
    <property type="entry name" value="CELL DIVISION PROTEIN WHIA-RELATED"/>
    <property type="match status" value="1"/>
</dbReference>
<dbReference type="Pfam" id="PF02650">
    <property type="entry name" value="HTH_WhiA"/>
    <property type="match status" value="1"/>
</dbReference>
<dbReference type="Pfam" id="PF14527">
    <property type="entry name" value="LAGLIDADG_WhiA"/>
    <property type="match status" value="1"/>
</dbReference>
<dbReference type="Pfam" id="PF10298">
    <property type="entry name" value="WhiA_N"/>
    <property type="match status" value="1"/>
</dbReference>
<proteinExistence type="inferred from homology"/>
<protein>
    <recommendedName>
        <fullName evidence="1">Probable cell division protein WhiA</fullName>
    </recommendedName>
</protein>
<sequence length="316" mass="34512">MALLDDVKSELAAFEGDSPAAIKAQAAAMIRFGGGLRPVQNTYVIQAVFTSLDVAEWLKNTLRNTFGHEAEINHLTRQTPNGPVETYVVLVTRNVVALALQTGLVDRRKQQVRGLPSEVVNGSIAQIKAAWRGAFMARGFLSDPGKASFLEIACPTEEAAMALCGVARRLGIQAKHRTLRSSERVTLKDPDAIERMLKLMGATRSAREWTGKRSDGEARGKANRLANFDDANMRRSAKAAAEASEKVQHAFEVLGDNIPDNLRQAGQLRIDHVDKSLEELGKIAEPQITKDAIAGRIRRLLQLAEKTEKARAAEGK</sequence>
<accession>B7GQU6</accession>
<accession>E8MJH1</accession>
<organism>
    <name type="scientific">Bifidobacterium longum subsp. infantis (strain ATCC 15697 / DSM 20088 / JCM 1222 / NCTC 11817 / S12)</name>
    <dbReference type="NCBI Taxonomy" id="391904"/>
    <lineage>
        <taxon>Bacteria</taxon>
        <taxon>Bacillati</taxon>
        <taxon>Actinomycetota</taxon>
        <taxon>Actinomycetes</taxon>
        <taxon>Bifidobacteriales</taxon>
        <taxon>Bifidobacteriaceae</taxon>
        <taxon>Bifidobacterium</taxon>
    </lineage>
</organism>
<comment type="function">
    <text evidence="1">Involved in cell division and chromosome segregation.</text>
</comment>
<comment type="similarity">
    <text evidence="1">Belongs to the WhiA family.</text>
</comment>
<keyword id="KW-0131">Cell cycle</keyword>
<keyword id="KW-0132">Cell division</keyword>
<keyword id="KW-0238">DNA-binding</keyword>